<organism>
    <name type="scientific">Pyrobaculum aerophilum (strain ATCC 51768 / DSM 7523 / JCM 9630 / CIP 104966 / NBRC 100827 / IM2)</name>
    <dbReference type="NCBI Taxonomy" id="178306"/>
    <lineage>
        <taxon>Archaea</taxon>
        <taxon>Thermoproteota</taxon>
        <taxon>Thermoprotei</taxon>
        <taxon>Thermoproteales</taxon>
        <taxon>Thermoproteaceae</taxon>
        <taxon>Pyrobaculum</taxon>
    </lineage>
</organism>
<sequence length="484" mass="53843">MRNIPINKINDYVWEIPPGVKPCQKVPVRIYADSVLLEKMKSDMTLEQGINVGCLPGIYRWSIVLPDAHQGYGFPIGGVAAIDAEEGVISPGGIGYDINCGVRVLRTNLTEEDVRPKLKELVDTIFRLVPPGVGGTGHLRLSPSEFERVLAEGVEWAVQKGYGWAEDMEYIEERGSWKLADPSKVSEKAKARGRDQLGTLGSGNHFLEIQVVDKIYDEKIAKLFGIEREGQVVVMIHTGSRGFGHQVATDYLLIMERKMRQWGLNLPDRELAAAPLKDKVAEDYIKAMASAANFAWTNRHIIMHWVREAFKKVFGSIEKVGLEVVYDVAHNIAKLEEHVVDEKGTVRKVWVHRKGATRAFPPGRSEIPAKYREVGQPVLIPGSMGTASWILVGTHDAMRLTFGTAPHGAGRVLSREAAIRMYPPHKVQEEMAKRGIIVRSAETEVISEEAPWAYKDVDRVVEAAHQVGFAKKVVRQRPIGVVKG</sequence>
<gene>
    <name type="primary">rtcB</name>
    <name type="ordered locus">PAE0998</name>
</gene>
<evidence type="ECO:0000250" key="1">
    <source>
        <dbReference type="UniProtKB" id="O59245"/>
    </source>
</evidence>
<evidence type="ECO:0000269" key="2">
    <source>
    </source>
</evidence>
<evidence type="ECO:0000303" key="3">
    <source>
    </source>
</evidence>
<evidence type="ECO:0000305" key="4"/>
<accession>Q8ZY09</accession>
<name>RTCB_PYRAE</name>
<keyword id="KW-0342">GTP-binding</keyword>
<keyword id="KW-0436">Ligase</keyword>
<keyword id="KW-0464">Manganese</keyword>
<keyword id="KW-0479">Metal-binding</keyword>
<keyword id="KW-0547">Nucleotide-binding</keyword>
<keyword id="KW-1185">Reference proteome</keyword>
<keyword id="KW-0819">tRNA processing</keyword>
<feature type="chain" id="PRO_0000232543" description="tRNA-splicing ligase RtcB">
    <location>
        <begin position="1"/>
        <end position="484"/>
    </location>
</feature>
<feature type="active site" description="GMP-histidine intermediate" evidence="1">
    <location>
        <position position="407"/>
    </location>
</feature>
<feature type="binding site" evidence="1">
    <location>
        <position position="97"/>
    </location>
    <ligand>
        <name>Mn(2+)</name>
        <dbReference type="ChEBI" id="CHEBI:29035"/>
        <label>1</label>
    </ligand>
</feature>
<feature type="binding site" evidence="1">
    <location>
        <position position="100"/>
    </location>
    <ligand>
        <name>Mn(2+)</name>
        <dbReference type="ChEBI" id="CHEBI:29035"/>
        <label>1</label>
    </ligand>
</feature>
<feature type="binding site" evidence="1">
    <location>
        <position position="100"/>
    </location>
    <ligand>
        <name>Mn(2+)</name>
        <dbReference type="ChEBI" id="CHEBI:29035"/>
        <label>2</label>
    </ligand>
</feature>
<feature type="binding site" evidence="1">
    <location>
        <begin position="204"/>
        <end position="208"/>
    </location>
    <ligand>
        <name>GMP</name>
        <dbReference type="ChEBI" id="CHEBI:58115"/>
    </ligand>
</feature>
<feature type="binding site" evidence="1">
    <location>
        <position position="205"/>
    </location>
    <ligand>
        <name>Mn(2+)</name>
        <dbReference type="ChEBI" id="CHEBI:29035"/>
        <label>1</label>
    </ligand>
</feature>
<feature type="binding site" evidence="1">
    <location>
        <position position="237"/>
    </location>
    <ligand>
        <name>Mn(2+)</name>
        <dbReference type="ChEBI" id="CHEBI:29035"/>
        <label>2</label>
    </ligand>
</feature>
<feature type="binding site" evidence="1">
    <location>
        <begin position="330"/>
        <end position="331"/>
    </location>
    <ligand>
        <name>GMP</name>
        <dbReference type="ChEBI" id="CHEBI:58115"/>
    </ligand>
</feature>
<feature type="binding site" evidence="1">
    <location>
        <position position="330"/>
    </location>
    <ligand>
        <name>Mn(2+)</name>
        <dbReference type="ChEBI" id="CHEBI:29035"/>
        <label>2</label>
    </ligand>
</feature>
<feature type="binding site" evidence="1">
    <location>
        <begin position="381"/>
        <end position="384"/>
    </location>
    <ligand>
        <name>GMP</name>
        <dbReference type="ChEBI" id="CHEBI:58115"/>
    </ligand>
</feature>
<feature type="binding site" evidence="1">
    <location>
        <position position="388"/>
    </location>
    <ligand>
        <name>GMP</name>
        <dbReference type="ChEBI" id="CHEBI:58115"/>
    </ligand>
</feature>
<feature type="binding site" evidence="1">
    <location>
        <begin position="407"/>
        <end position="410"/>
    </location>
    <ligand>
        <name>GMP</name>
        <dbReference type="ChEBI" id="CHEBI:58115"/>
    </ligand>
</feature>
<feature type="binding site" evidence="1">
    <location>
        <position position="483"/>
    </location>
    <ligand>
        <name>GMP</name>
        <dbReference type="ChEBI" id="CHEBI:58115"/>
    </ligand>
</feature>
<feature type="mutagenesis site" description="Abolishes tRNA ligase activity; when associated with A-205 and A-237." evidence="2">
    <original>C</original>
    <variation>A</variation>
    <location>
        <position position="100"/>
    </location>
</feature>
<feature type="mutagenesis site" description="Abolishes tRNA ligase activity; when associated with A-100 and A-237." evidence="2">
    <original>H</original>
    <variation>A</variation>
    <location>
        <position position="205"/>
    </location>
</feature>
<feature type="mutagenesis site" description="Abolishes tRNA ligase activity; when associated with A-100 and A-205." evidence="2">
    <original>H</original>
    <variation>A</variation>
    <location>
        <position position="237"/>
    </location>
</feature>
<comment type="function">
    <text evidence="1 2">Essential for tRNA splicing and maturation (PubMed:21209330). Acts by directly joining spliced tRNA halves to mature-sized tRNAs (PubMed:21209330). Joins RNA with 2',3'-cyclic-phosphate or 3'-phosphate ends to RNA with 5'-hydroxy ends (By similarity).</text>
</comment>
<comment type="catalytic activity">
    <reaction evidence="1">
        <text>a 3'-end 3'-phospho-ribonucleotide-RNA + a 5'-end dephospho-ribonucleoside-RNA + GTP = a ribonucleotidyl-ribonucleotide-RNA + GMP + diphosphate</text>
        <dbReference type="Rhea" id="RHEA:68076"/>
        <dbReference type="Rhea" id="RHEA-COMP:10463"/>
        <dbReference type="Rhea" id="RHEA-COMP:13936"/>
        <dbReference type="Rhea" id="RHEA-COMP:17355"/>
        <dbReference type="ChEBI" id="CHEBI:33019"/>
        <dbReference type="ChEBI" id="CHEBI:37565"/>
        <dbReference type="ChEBI" id="CHEBI:58115"/>
        <dbReference type="ChEBI" id="CHEBI:83062"/>
        <dbReference type="ChEBI" id="CHEBI:138284"/>
        <dbReference type="ChEBI" id="CHEBI:173118"/>
        <dbReference type="EC" id="6.5.1.8"/>
    </reaction>
</comment>
<comment type="catalytic activity">
    <reaction evidence="2">
        <text>a 3'-end 2',3'-cyclophospho-ribonucleotide-RNA + a 5'-end dephospho-ribonucleoside-RNA + GTP + H2O = a ribonucleotidyl-ribonucleotide-RNA + GMP + diphosphate + H(+)</text>
        <dbReference type="Rhea" id="RHEA:68080"/>
        <dbReference type="Rhea" id="RHEA-COMP:10464"/>
        <dbReference type="Rhea" id="RHEA-COMP:13936"/>
        <dbReference type="Rhea" id="RHEA-COMP:17355"/>
        <dbReference type="ChEBI" id="CHEBI:15377"/>
        <dbReference type="ChEBI" id="CHEBI:15378"/>
        <dbReference type="ChEBI" id="CHEBI:33019"/>
        <dbReference type="ChEBI" id="CHEBI:37565"/>
        <dbReference type="ChEBI" id="CHEBI:58115"/>
        <dbReference type="ChEBI" id="CHEBI:83064"/>
        <dbReference type="ChEBI" id="CHEBI:138284"/>
        <dbReference type="ChEBI" id="CHEBI:173118"/>
        <dbReference type="EC" id="6.5.1.8"/>
    </reaction>
</comment>
<comment type="cofactor">
    <cofactor evidence="1">
        <name>Mn(2+)</name>
        <dbReference type="ChEBI" id="CHEBI:29035"/>
    </cofactor>
    <text evidence="1 2">Binds 2 manganese ions per subunit (By similarity). Can use zinc ions (PubMed:21209330).</text>
</comment>
<comment type="subunit">
    <text evidence="1">Monomer.</text>
</comment>
<comment type="miscellaneous">
    <text evidence="1">Ligation proceeds through 3 nucleotidyl transfer steps, with 2',3'-cyclic phosphate termini being hydrolyzed to 3'-P termini in a step that precedes 3'-P activation with GMP. In the first nucleotidyl transfer step, RtcB reacts with GTP to form a covalent RtcB-histidine-GMP intermediate with release of PPi; in the second step, the GMP moiety is transferred to the RNA 3'-P; in the third step, the 5'-OH from the opposite RNA strand attacks the activated 3'-P to form a 3',5'-phosphodiester bond and release GMP.</text>
</comment>
<comment type="similarity">
    <text evidence="4">Belongs to the RtcB family.</text>
</comment>
<reference key="1">
    <citation type="journal article" date="2002" name="Proc. Natl. Acad. Sci. U.S.A.">
        <title>Genome sequence of the hyperthermophilic crenarchaeon Pyrobaculum aerophilum.</title>
        <authorList>
            <person name="Fitz-Gibbon S.T."/>
            <person name="Ladner H."/>
            <person name="Kim U.-J."/>
            <person name="Stetter K.O."/>
            <person name="Simon M.I."/>
            <person name="Miller J.H."/>
        </authorList>
    </citation>
    <scope>NUCLEOTIDE SEQUENCE [LARGE SCALE GENOMIC DNA]</scope>
    <source>
        <strain>ATCC 51768 / DSM 7523 / JCM 9630 / CIP 104966 / NBRC 100827 / IM2</strain>
    </source>
</reference>
<reference key="2">
    <citation type="journal article" date="2011" name="Proc. Natl. Acad. Sci. U.S.A.">
        <title>Archaeal 3'-phosphate RNA splicing ligase characterization identifies the missing component in tRNA maturation.</title>
        <authorList>
            <person name="Englert M."/>
            <person name="Sheppard K."/>
            <person name="Aslanian A."/>
            <person name="Yates J.R. III"/>
            <person name="Soll D."/>
        </authorList>
    </citation>
    <scope>FUNCTION</scope>
    <scope>CATALYTIC ACTIVITY</scope>
    <scope>COFACTOR</scope>
    <scope>MUTAGENESIS OF CYS-100; HIS-205 AND HIS-237</scope>
    <source>
        <strain>ATCC 51768 / DSM 7523 / JCM 9630 / CIP 104966 / NBRC 100827 / IM2</strain>
    </source>
</reference>
<proteinExistence type="evidence at protein level"/>
<dbReference type="EC" id="6.5.1.8" evidence="2"/>
<dbReference type="EMBL" id="AE009441">
    <property type="protein sequence ID" value="AAL63187.1"/>
    <property type="molecule type" value="Genomic_DNA"/>
</dbReference>
<dbReference type="RefSeq" id="WP_011007659.1">
    <property type="nucleotide sequence ID" value="NC_003364.1"/>
</dbReference>
<dbReference type="SMR" id="Q8ZY09"/>
<dbReference type="FunCoup" id="Q8ZY09">
    <property type="interactions" value="189"/>
</dbReference>
<dbReference type="STRING" id="178306.PAE0998"/>
<dbReference type="EnsemblBacteria" id="AAL63187">
    <property type="protein sequence ID" value="AAL63187"/>
    <property type="gene ID" value="PAE0998"/>
</dbReference>
<dbReference type="GeneID" id="1465422"/>
<dbReference type="KEGG" id="pai:PAE0998"/>
<dbReference type="PATRIC" id="fig|178306.9.peg.742"/>
<dbReference type="eggNOG" id="arCOG04246">
    <property type="taxonomic scope" value="Archaea"/>
</dbReference>
<dbReference type="HOGENOM" id="CLU_022279_0_1_2"/>
<dbReference type="InParanoid" id="Q8ZY09"/>
<dbReference type="BRENDA" id="6.5.1.8">
    <property type="organism ID" value="5239"/>
</dbReference>
<dbReference type="Proteomes" id="UP000002439">
    <property type="component" value="Chromosome"/>
</dbReference>
<dbReference type="GO" id="GO:0005525">
    <property type="term" value="F:GTP binding"/>
    <property type="evidence" value="ECO:0007669"/>
    <property type="project" value="UniProtKB-KW"/>
</dbReference>
<dbReference type="GO" id="GO:0046872">
    <property type="term" value="F:metal ion binding"/>
    <property type="evidence" value="ECO:0007669"/>
    <property type="project" value="UniProtKB-KW"/>
</dbReference>
<dbReference type="GO" id="GO:0170057">
    <property type="term" value="F:RNA ligase (GTP) activity"/>
    <property type="evidence" value="ECO:0007669"/>
    <property type="project" value="UniProtKB-EC"/>
</dbReference>
<dbReference type="GO" id="GO:0008452">
    <property type="term" value="F:RNA ligase activity"/>
    <property type="evidence" value="ECO:0000304"/>
    <property type="project" value="UniProtKB"/>
</dbReference>
<dbReference type="GO" id="GO:0006388">
    <property type="term" value="P:tRNA splicing, via endonucleolytic cleavage and ligation"/>
    <property type="evidence" value="ECO:0000314"/>
    <property type="project" value="UniProtKB"/>
</dbReference>
<dbReference type="FunFam" id="3.90.1860.10:FF:000001">
    <property type="entry name" value="tRNA-splicing ligase RtcB homolog"/>
    <property type="match status" value="1"/>
</dbReference>
<dbReference type="Gene3D" id="3.90.1860.10">
    <property type="entry name" value="tRNA-splicing ligase RtcB"/>
    <property type="match status" value="1"/>
</dbReference>
<dbReference type="InterPro" id="IPR001233">
    <property type="entry name" value="RtcB"/>
</dbReference>
<dbReference type="InterPro" id="IPR036025">
    <property type="entry name" value="RtcB-like_sf"/>
</dbReference>
<dbReference type="PANTHER" id="PTHR11118">
    <property type="entry name" value="RNA-SPLICING LIGASE RTCB HOMOLOG"/>
    <property type="match status" value="1"/>
</dbReference>
<dbReference type="PANTHER" id="PTHR11118:SF1">
    <property type="entry name" value="RNA-SPLICING LIGASE RTCB HOMOLOG"/>
    <property type="match status" value="1"/>
</dbReference>
<dbReference type="Pfam" id="PF01139">
    <property type="entry name" value="RtcB"/>
    <property type="match status" value="1"/>
</dbReference>
<dbReference type="SUPFAM" id="SSF103365">
    <property type="entry name" value="Hypothetical protein PH1602"/>
    <property type="match status" value="1"/>
</dbReference>
<protein>
    <recommendedName>
        <fullName evidence="4">tRNA-splicing ligase RtcB</fullName>
        <ecNumber evidence="2">6.5.1.8</ecNumber>
    </recommendedName>
    <alternativeName>
        <fullName evidence="1">3'-phosphate/5'-hydroxy nucleic acid ligase</fullName>
    </alternativeName>
    <alternativeName>
        <fullName evidence="3">Archaeal 3'-phosphate RNA splicing ligase</fullName>
    </alternativeName>
</protein>